<dbReference type="EC" id="6.3.4.2" evidence="1"/>
<dbReference type="EMBL" id="CP000580">
    <property type="protein sequence ID" value="ABN98738.1"/>
    <property type="molecule type" value="Genomic_DNA"/>
</dbReference>
<dbReference type="SMR" id="A3Q0R1"/>
<dbReference type="MEROPS" id="C26.964"/>
<dbReference type="KEGG" id="mjl:Mjls_2959"/>
<dbReference type="HOGENOM" id="CLU_011675_5_0_11"/>
<dbReference type="BioCyc" id="MSP164757:G1G8C-2979-MONOMER"/>
<dbReference type="UniPathway" id="UPA00159">
    <property type="reaction ID" value="UER00277"/>
</dbReference>
<dbReference type="GO" id="GO:0005829">
    <property type="term" value="C:cytosol"/>
    <property type="evidence" value="ECO:0007669"/>
    <property type="project" value="TreeGrafter"/>
</dbReference>
<dbReference type="GO" id="GO:0005524">
    <property type="term" value="F:ATP binding"/>
    <property type="evidence" value="ECO:0007669"/>
    <property type="project" value="UniProtKB-KW"/>
</dbReference>
<dbReference type="GO" id="GO:0003883">
    <property type="term" value="F:CTP synthase activity"/>
    <property type="evidence" value="ECO:0007669"/>
    <property type="project" value="UniProtKB-UniRule"/>
</dbReference>
<dbReference type="GO" id="GO:0004359">
    <property type="term" value="F:glutaminase activity"/>
    <property type="evidence" value="ECO:0007669"/>
    <property type="project" value="RHEA"/>
</dbReference>
<dbReference type="GO" id="GO:0042802">
    <property type="term" value="F:identical protein binding"/>
    <property type="evidence" value="ECO:0007669"/>
    <property type="project" value="TreeGrafter"/>
</dbReference>
<dbReference type="GO" id="GO:0046872">
    <property type="term" value="F:metal ion binding"/>
    <property type="evidence" value="ECO:0007669"/>
    <property type="project" value="UniProtKB-KW"/>
</dbReference>
<dbReference type="GO" id="GO:0044210">
    <property type="term" value="P:'de novo' CTP biosynthetic process"/>
    <property type="evidence" value="ECO:0007669"/>
    <property type="project" value="UniProtKB-UniRule"/>
</dbReference>
<dbReference type="GO" id="GO:0019856">
    <property type="term" value="P:pyrimidine nucleobase biosynthetic process"/>
    <property type="evidence" value="ECO:0007669"/>
    <property type="project" value="TreeGrafter"/>
</dbReference>
<dbReference type="CDD" id="cd03113">
    <property type="entry name" value="CTPS_N"/>
    <property type="match status" value="1"/>
</dbReference>
<dbReference type="CDD" id="cd01746">
    <property type="entry name" value="GATase1_CTP_Synthase"/>
    <property type="match status" value="1"/>
</dbReference>
<dbReference type="FunFam" id="3.40.50.300:FF:000009">
    <property type="entry name" value="CTP synthase"/>
    <property type="match status" value="1"/>
</dbReference>
<dbReference type="FunFam" id="3.40.50.880:FF:000002">
    <property type="entry name" value="CTP synthase"/>
    <property type="match status" value="1"/>
</dbReference>
<dbReference type="Gene3D" id="3.40.50.880">
    <property type="match status" value="1"/>
</dbReference>
<dbReference type="Gene3D" id="3.40.50.300">
    <property type="entry name" value="P-loop containing nucleotide triphosphate hydrolases"/>
    <property type="match status" value="1"/>
</dbReference>
<dbReference type="HAMAP" id="MF_01227">
    <property type="entry name" value="PyrG"/>
    <property type="match status" value="1"/>
</dbReference>
<dbReference type="InterPro" id="IPR029062">
    <property type="entry name" value="Class_I_gatase-like"/>
</dbReference>
<dbReference type="InterPro" id="IPR004468">
    <property type="entry name" value="CTP_synthase"/>
</dbReference>
<dbReference type="InterPro" id="IPR017456">
    <property type="entry name" value="CTP_synthase_N"/>
</dbReference>
<dbReference type="InterPro" id="IPR017926">
    <property type="entry name" value="GATASE"/>
</dbReference>
<dbReference type="InterPro" id="IPR033828">
    <property type="entry name" value="GATase1_CTP_Synthase"/>
</dbReference>
<dbReference type="InterPro" id="IPR027417">
    <property type="entry name" value="P-loop_NTPase"/>
</dbReference>
<dbReference type="NCBIfam" id="NF003792">
    <property type="entry name" value="PRK05380.1"/>
    <property type="match status" value="1"/>
</dbReference>
<dbReference type="NCBIfam" id="TIGR00337">
    <property type="entry name" value="PyrG"/>
    <property type="match status" value="1"/>
</dbReference>
<dbReference type="PANTHER" id="PTHR11550">
    <property type="entry name" value="CTP SYNTHASE"/>
    <property type="match status" value="1"/>
</dbReference>
<dbReference type="PANTHER" id="PTHR11550:SF0">
    <property type="entry name" value="CTP SYNTHASE-RELATED"/>
    <property type="match status" value="1"/>
</dbReference>
<dbReference type="Pfam" id="PF06418">
    <property type="entry name" value="CTP_synth_N"/>
    <property type="match status" value="1"/>
</dbReference>
<dbReference type="Pfam" id="PF00117">
    <property type="entry name" value="GATase"/>
    <property type="match status" value="1"/>
</dbReference>
<dbReference type="SUPFAM" id="SSF52317">
    <property type="entry name" value="Class I glutamine amidotransferase-like"/>
    <property type="match status" value="1"/>
</dbReference>
<dbReference type="SUPFAM" id="SSF52540">
    <property type="entry name" value="P-loop containing nucleoside triphosphate hydrolases"/>
    <property type="match status" value="1"/>
</dbReference>
<dbReference type="PROSITE" id="PS51273">
    <property type="entry name" value="GATASE_TYPE_1"/>
    <property type="match status" value="1"/>
</dbReference>
<accession>A3Q0R1</accession>
<keyword id="KW-0067">ATP-binding</keyword>
<keyword id="KW-0315">Glutamine amidotransferase</keyword>
<keyword id="KW-0436">Ligase</keyword>
<keyword id="KW-0460">Magnesium</keyword>
<keyword id="KW-0479">Metal-binding</keyword>
<keyword id="KW-0547">Nucleotide-binding</keyword>
<keyword id="KW-0665">Pyrimidine biosynthesis</keyword>
<reference key="1">
    <citation type="submission" date="2007-02" db="EMBL/GenBank/DDBJ databases">
        <title>Complete sequence of Mycobacterium sp. JLS.</title>
        <authorList>
            <consortium name="US DOE Joint Genome Institute"/>
            <person name="Copeland A."/>
            <person name="Lucas S."/>
            <person name="Lapidus A."/>
            <person name="Barry K."/>
            <person name="Detter J.C."/>
            <person name="Glavina del Rio T."/>
            <person name="Hammon N."/>
            <person name="Israni S."/>
            <person name="Dalin E."/>
            <person name="Tice H."/>
            <person name="Pitluck S."/>
            <person name="Chain P."/>
            <person name="Malfatti S."/>
            <person name="Shin M."/>
            <person name="Vergez L."/>
            <person name="Schmutz J."/>
            <person name="Larimer F."/>
            <person name="Land M."/>
            <person name="Hauser L."/>
            <person name="Kyrpides N."/>
            <person name="Mikhailova N."/>
            <person name="Miller C.D."/>
            <person name="Anderson A.J."/>
            <person name="Sims R.C."/>
            <person name="Richardson P."/>
        </authorList>
    </citation>
    <scope>NUCLEOTIDE SEQUENCE [LARGE SCALE GENOMIC DNA]</scope>
    <source>
        <strain>JLS</strain>
    </source>
</reference>
<name>PYRG_MYCSJ</name>
<sequence length="579" mass="63076">MPALRKHPQTATKHLFVTGGVVSSLGKGLTGSSLGQLLTARGLQVTMQKLDPYLNVDPGTMNPFQHGEVFVTEDGAETDLDVGHYERFLDRNLSGSANVTTGQIYSSVIAKERRGEYLGDTVQVIPHITDEIKSRIVAMAAPDEHGNRPDVVITEVGGTVGDIESLPFLEAARQVRHEVGRENCFFLHCSLVPYMAPSGELKTKPTQHSVAALRSIGIQPDALILRCDRDVPEALKNKIALMCDVDIDGVISTPDAPSIYDIPKVLHREELDAYVVRRLNLPFRDVDWTQWNDLLKRVHEPHETVRIALVGKYIDLSDAYLSVTEALRAGGFFHHAKVEMRWVASDDCELDSGAAAALADVDGVLIPGGFGIRGIEGKIGAISYARKRGLPVLGLCLGLQCIVIEAARSVGITGANSAEFDPATPDPVISTMADQRDAVAGEADLGGTMRLGAYPAVLEEDSIVARAYQATEVSERHRHRYEVNNAYRDRIAESGLRFSGTSPDGHLVEFVEYDAEQHPFLVGTQAHPELKSRPTRPHPLFAAFIGAALDYKAAERLPVEIPEQRSNGVELLQEPASRG</sequence>
<evidence type="ECO:0000255" key="1">
    <source>
        <dbReference type="HAMAP-Rule" id="MF_01227"/>
    </source>
</evidence>
<comment type="function">
    <text evidence="1">Catalyzes the ATP-dependent amination of UTP to CTP with either L-glutamine or ammonia as the source of nitrogen. Regulates intracellular CTP levels through interactions with the four ribonucleotide triphosphates.</text>
</comment>
<comment type="catalytic activity">
    <reaction evidence="1">
        <text>UTP + L-glutamine + ATP + H2O = CTP + L-glutamate + ADP + phosphate + 2 H(+)</text>
        <dbReference type="Rhea" id="RHEA:26426"/>
        <dbReference type="ChEBI" id="CHEBI:15377"/>
        <dbReference type="ChEBI" id="CHEBI:15378"/>
        <dbReference type="ChEBI" id="CHEBI:29985"/>
        <dbReference type="ChEBI" id="CHEBI:30616"/>
        <dbReference type="ChEBI" id="CHEBI:37563"/>
        <dbReference type="ChEBI" id="CHEBI:43474"/>
        <dbReference type="ChEBI" id="CHEBI:46398"/>
        <dbReference type="ChEBI" id="CHEBI:58359"/>
        <dbReference type="ChEBI" id="CHEBI:456216"/>
        <dbReference type="EC" id="6.3.4.2"/>
    </reaction>
</comment>
<comment type="catalytic activity">
    <reaction evidence="1">
        <text>L-glutamine + H2O = L-glutamate + NH4(+)</text>
        <dbReference type="Rhea" id="RHEA:15889"/>
        <dbReference type="ChEBI" id="CHEBI:15377"/>
        <dbReference type="ChEBI" id="CHEBI:28938"/>
        <dbReference type="ChEBI" id="CHEBI:29985"/>
        <dbReference type="ChEBI" id="CHEBI:58359"/>
    </reaction>
</comment>
<comment type="catalytic activity">
    <reaction evidence="1">
        <text>UTP + NH4(+) + ATP = CTP + ADP + phosphate + 2 H(+)</text>
        <dbReference type="Rhea" id="RHEA:16597"/>
        <dbReference type="ChEBI" id="CHEBI:15378"/>
        <dbReference type="ChEBI" id="CHEBI:28938"/>
        <dbReference type="ChEBI" id="CHEBI:30616"/>
        <dbReference type="ChEBI" id="CHEBI:37563"/>
        <dbReference type="ChEBI" id="CHEBI:43474"/>
        <dbReference type="ChEBI" id="CHEBI:46398"/>
        <dbReference type="ChEBI" id="CHEBI:456216"/>
    </reaction>
</comment>
<comment type="activity regulation">
    <text evidence="1">Allosterically activated by GTP, when glutamine is the substrate; GTP has no effect on the reaction when ammonia is the substrate. The allosteric effector GTP functions by stabilizing the protein conformation that binds the tetrahedral intermediate(s) formed during glutamine hydrolysis. Inhibited by the product CTP, via allosteric rather than competitive inhibition.</text>
</comment>
<comment type="pathway">
    <text evidence="1">Pyrimidine metabolism; CTP biosynthesis via de novo pathway; CTP from UDP: step 2/2.</text>
</comment>
<comment type="subunit">
    <text evidence="1">Homotetramer.</text>
</comment>
<comment type="miscellaneous">
    <text evidence="1">CTPSs have evolved a hybrid strategy for distinguishing between UTP and CTP. The overlapping regions of the product feedback inhibitory and substrate sites recognize a common feature in both compounds, the triphosphate moiety. To differentiate isosteric substrate and product pyrimidine rings, an additional pocket far from the expected kinase/ligase catalytic site, specifically recognizes the cytosine and ribose portions of the product inhibitor.</text>
</comment>
<comment type="similarity">
    <text evidence="1">Belongs to the CTP synthase family.</text>
</comment>
<protein>
    <recommendedName>
        <fullName evidence="1">CTP synthase</fullName>
        <ecNumber evidence="1">6.3.4.2</ecNumber>
    </recommendedName>
    <alternativeName>
        <fullName evidence="1">Cytidine 5'-triphosphate synthase</fullName>
    </alternativeName>
    <alternativeName>
        <fullName evidence="1">Cytidine triphosphate synthetase</fullName>
        <shortName evidence="1">CTP synthetase</shortName>
        <shortName evidence="1">CTPS</shortName>
    </alternativeName>
    <alternativeName>
        <fullName evidence="1">UTP--ammonia ligase</fullName>
    </alternativeName>
</protein>
<proteinExistence type="inferred from homology"/>
<gene>
    <name evidence="1" type="primary">pyrG</name>
    <name type="ordered locus">Mjls_2959</name>
</gene>
<feature type="chain" id="PRO_1000139497" description="CTP synthase">
    <location>
        <begin position="1"/>
        <end position="579"/>
    </location>
</feature>
<feature type="domain" description="Glutamine amidotransferase type-1" evidence="1">
    <location>
        <begin position="306"/>
        <end position="554"/>
    </location>
</feature>
<feature type="region of interest" description="Amidoligase domain" evidence="1">
    <location>
        <begin position="1"/>
        <end position="281"/>
    </location>
</feature>
<feature type="active site" description="Nucleophile; for glutamine hydrolysis" evidence="1">
    <location>
        <position position="396"/>
    </location>
</feature>
<feature type="active site" evidence="1">
    <location>
        <position position="527"/>
    </location>
</feature>
<feature type="active site" evidence="1">
    <location>
        <position position="529"/>
    </location>
</feature>
<feature type="binding site" evidence="1">
    <location>
        <position position="23"/>
    </location>
    <ligand>
        <name>CTP</name>
        <dbReference type="ChEBI" id="CHEBI:37563"/>
        <note>allosteric inhibitor</note>
    </ligand>
</feature>
<feature type="binding site" evidence="1">
    <location>
        <position position="23"/>
    </location>
    <ligand>
        <name>UTP</name>
        <dbReference type="ChEBI" id="CHEBI:46398"/>
    </ligand>
</feature>
<feature type="binding site" evidence="1">
    <location>
        <begin position="24"/>
        <end position="29"/>
    </location>
    <ligand>
        <name>ATP</name>
        <dbReference type="ChEBI" id="CHEBI:30616"/>
    </ligand>
</feature>
<feature type="binding site" evidence="1">
    <location>
        <position position="81"/>
    </location>
    <ligand>
        <name>ATP</name>
        <dbReference type="ChEBI" id="CHEBI:30616"/>
    </ligand>
</feature>
<feature type="binding site" evidence="1">
    <location>
        <position position="81"/>
    </location>
    <ligand>
        <name>Mg(2+)</name>
        <dbReference type="ChEBI" id="CHEBI:18420"/>
    </ligand>
</feature>
<feature type="binding site" evidence="1">
    <location>
        <position position="155"/>
    </location>
    <ligand>
        <name>Mg(2+)</name>
        <dbReference type="ChEBI" id="CHEBI:18420"/>
    </ligand>
</feature>
<feature type="binding site" evidence="1">
    <location>
        <begin position="162"/>
        <end position="164"/>
    </location>
    <ligand>
        <name>CTP</name>
        <dbReference type="ChEBI" id="CHEBI:37563"/>
        <note>allosteric inhibitor</note>
    </ligand>
</feature>
<feature type="binding site" evidence="1">
    <location>
        <begin position="202"/>
        <end position="207"/>
    </location>
    <ligand>
        <name>CTP</name>
        <dbReference type="ChEBI" id="CHEBI:37563"/>
        <note>allosteric inhibitor</note>
    </ligand>
</feature>
<feature type="binding site" evidence="1">
    <location>
        <begin position="202"/>
        <end position="207"/>
    </location>
    <ligand>
        <name>UTP</name>
        <dbReference type="ChEBI" id="CHEBI:46398"/>
    </ligand>
</feature>
<feature type="binding site" evidence="1">
    <location>
        <position position="238"/>
    </location>
    <ligand>
        <name>CTP</name>
        <dbReference type="ChEBI" id="CHEBI:37563"/>
        <note>allosteric inhibitor</note>
    </ligand>
</feature>
<feature type="binding site" evidence="1">
    <location>
        <position position="238"/>
    </location>
    <ligand>
        <name>UTP</name>
        <dbReference type="ChEBI" id="CHEBI:46398"/>
    </ligand>
</feature>
<feature type="binding site" evidence="1">
    <location>
        <position position="369"/>
    </location>
    <ligand>
        <name>L-glutamine</name>
        <dbReference type="ChEBI" id="CHEBI:58359"/>
    </ligand>
</feature>
<feature type="binding site" evidence="1">
    <location>
        <begin position="397"/>
        <end position="400"/>
    </location>
    <ligand>
        <name>L-glutamine</name>
        <dbReference type="ChEBI" id="CHEBI:58359"/>
    </ligand>
</feature>
<feature type="binding site" evidence="1">
    <location>
        <position position="419"/>
    </location>
    <ligand>
        <name>L-glutamine</name>
        <dbReference type="ChEBI" id="CHEBI:58359"/>
    </ligand>
</feature>
<feature type="binding site" evidence="1">
    <location>
        <position position="480"/>
    </location>
    <ligand>
        <name>L-glutamine</name>
        <dbReference type="ChEBI" id="CHEBI:58359"/>
    </ligand>
</feature>
<organism>
    <name type="scientific">Mycobacterium sp. (strain JLS)</name>
    <dbReference type="NCBI Taxonomy" id="164757"/>
    <lineage>
        <taxon>Bacteria</taxon>
        <taxon>Bacillati</taxon>
        <taxon>Actinomycetota</taxon>
        <taxon>Actinomycetes</taxon>
        <taxon>Mycobacteriales</taxon>
        <taxon>Mycobacteriaceae</taxon>
        <taxon>Mycobacterium</taxon>
    </lineage>
</organism>